<evidence type="ECO:0000255" key="1">
    <source>
        <dbReference type="HAMAP-Rule" id="MF_02006"/>
    </source>
</evidence>
<gene>
    <name evidence="1" type="primary">tyrS</name>
    <name type="ordered locus">Lxx06140</name>
</gene>
<keyword id="KW-0030">Aminoacyl-tRNA synthetase</keyword>
<keyword id="KW-0067">ATP-binding</keyword>
<keyword id="KW-0963">Cytoplasm</keyword>
<keyword id="KW-0436">Ligase</keyword>
<keyword id="KW-0547">Nucleotide-binding</keyword>
<keyword id="KW-0648">Protein biosynthesis</keyword>
<keyword id="KW-1185">Reference proteome</keyword>
<keyword id="KW-0694">RNA-binding</keyword>
<proteinExistence type="inferred from homology"/>
<accession>Q6AGC2</accession>
<name>SYY_LEIXX</name>
<protein>
    <recommendedName>
        <fullName evidence="1">Tyrosine--tRNA ligase</fullName>
        <ecNumber evidence="1">6.1.1.1</ecNumber>
    </recommendedName>
    <alternativeName>
        <fullName evidence="1">Tyrosyl-tRNA synthetase</fullName>
        <shortName evidence="1">TyrRS</shortName>
    </alternativeName>
</protein>
<reference key="1">
    <citation type="journal article" date="2004" name="Mol. Plant Microbe Interact.">
        <title>The genome sequence of the Gram-positive sugarcane pathogen Leifsonia xyli subsp. xyli.</title>
        <authorList>
            <person name="Monteiro-Vitorello C.B."/>
            <person name="Camargo L.E.A."/>
            <person name="Van Sluys M.A."/>
            <person name="Kitajima J.P."/>
            <person name="Truffi D."/>
            <person name="do Amaral A.M."/>
            <person name="Harakava R."/>
            <person name="de Oliveira J.C.F."/>
            <person name="Wood D."/>
            <person name="de Oliveira M.C."/>
            <person name="Miyaki C.Y."/>
            <person name="Takita M.A."/>
            <person name="da Silva A.C.R."/>
            <person name="Furlan L.R."/>
            <person name="Carraro D.M."/>
            <person name="Camarotte G."/>
            <person name="Almeida N.F. Jr."/>
            <person name="Carrer H."/>
            <person name="Coutinho L.L."/>
            <person name="El-Dorry H.A."/>
            <person name="Ferro M.I.T."/>
            <person name="Gagliardi P.R."/>
            <person name="Giglioti E."/>
            <person name="Goldman M.H.S."/>
            <person name="Goldman G.H."/>
            <person name="Kimura E.T."/>
            <person name="Ferro E.S."/>
            <person name="Kuramae E.E."/>
            <person name="Lemos E.G.M."/>
            <person name="Lemos M.V.F."/>
            <person name="Mauro S.M.Z."/>
            <person name="Machado M.A."/>
            <person name="Marino C.L."/>
            <person name="Menck C.F."/>
            <person name="Nunes L.R."/>
            <person name="Oliveira R.C."/>
            <person name="Pereira G.G."/>
            <person name="Siqueira W."/>
            <person name="de Souza A.A."/>
            <person name="Tsai S.M."/>
            <person name="Zanca A.S."/>
            <person name="Simpson A.J.G."/>
            <person name="Brumbley S.M."/>
            <person name="Setubal J.C."/>
        </authorList>
    </citation>
    <scope>NUCLEOTIDE SEQUENCE [LARGE SCALE GENOMIC DNA]</scope>
    <source>
        <strain>CTCB07</strain>
    </source>
</reference>
<sequence length="442" mass="47743">MSDSPSRQQQLLRAQSNDPSFDNVWDELIWRGLVYVSTDEAALKQLLAGEPIAYYCGFDPTAPSLHLGNLVQLLTMRRLQLAGHRPFGLVGGSTGLIGDPKPSAERTLNAKETVAEWVGSLREQVTRFLSAEGDNAVRLVNNLDWTAPLSAIDFLREIGKHFRVGAMLKKDAVAARLNSDEGISYTEFSYQILQGLDYLELYRQHGCVLQTGGSDQWGNLTSGTELIRRVEGGHAHAVGTPLITNSDGTKFGKSEGNAVWLDPALTSPYAMYQFWLNTDDADVIARLKVFTFLHRDEIERLERAVAEEPFRREAQRRLALDVTSLVHGAAAAEAVIAASEALFGRGGDLAQQDTDTLASALRELPHTVSAPGVAIAQALVDTGLTKSLSEARRAVAQGGVSANNATVQDADAPVGDALLPGGMLVLRRGKKTLAGVFVEEGV</sequence>
<feature type="chain" id="PRO_0000234721" description="Tyrosine--tRNA ligase">
    <location>
        <begin position="1"/>
        <end position="442"/>
    </location>
</feature>
<feature type="domain" description="S4 RNA-binding" evidence="1">
    <location>
        <begin position="373"/>
        <end position="438"/>
    </location>
</feature>
<feature type="short sequence motif" description="'HIGH' region">
    <location>
        <begin position="60"/>
        <end position="69"/>
    </location>
</feature>
<feature type="short sequence motif" description="'KMSKS' region">
    <location>
        <begin position="250"/>
        <end position="254"/>
    </location>
</feature>
<feature type="binding site" evidence="1">
    <location>
        <position position="55"/>
    </location>
    <ligand>
        <name>L-tyrosine</name>
        <dbReference type="ChEBI" id="CHEBI:58315"/>
    </ligand>
</feature>
<feature type="binding site" evidence="1">
    <location>
        <position position="190"/>
    </location>
    <ligand>
        <name>L-tyrosine</name>
        <dbReference type="ChEBI" id="CHEBI:58315"/>
    </ligand>
</feature>
<feature type="binding site" evidence="1">
    <location>
        <position position="194"/>
    </location>
    <ligand>
        <name>L-tyrosine</name>
        <dbReference type="ChEBI" id="CHEBI:58315"/>
    </ligand>
</feature>
<feature type="binding site" evidence="1">
    <location>
        <position position="253"/>
    </location>
    <ligand>
        <name>ATP</name>
        <dbReference type="ChEBI" id="CHEBI:30616"/>
    </ligand>
</feature>
<comment type="function">
    <text evidence="1">Catalyzes the attachment of tyrosine to tRNA(Tyr) in a two-step reaction: tyrosine is first activated by ATP to form Tyr-AMP and then transferred to the acceptor end of tRNA(Tyr).</text>
</comment>
<comment type="catalytic activity">
    <reaction evidence="1">
        <text>tRNA(Tyr) + L-tyrosine + ATP = L-tyrosyl-tRNA(Tyr) + AMP + diphosphate + H(+)</text>
        <dbReference type="Rhea" id="RHEA:10220"/>
        <dbReference type="Rhea" id="RHEA-COMP:9706"/>
        <dbReference type="Rhea" id="RHEA-COMP:9707"/>
        <dbReference type="ChEBI" id="CHEBI:15378"/>
        <dbReference type="ChEBI" id="CHEBI:30616"/>
        <dbReference type="ChEBI" id="CHEBI:33019"/>
        <dbReference type="ChEBI" id="CHEBI:58315"/>
        <dbReference type="ChEBI" id="CHEBI:78442"/>
        <dbReference type="ChEBI" id="CHEBI:78536"/>
        <dbReference type="ChEBI" id="CHEBI:456215"/>
        <dbReference type="EC" id="6.1.1.1"/>
    </reaction>
</comment>
<comment type="subunit">
    <text evidence="1">Homodimer.</text>
</comment>
<comment type="subcellular location">
    <subcellularLocation>
        <location evidence="1">Cytoplasm</location>
    </subcellularLocation>
</comment>
<comment type="similarity">
    <text evidence="1">Belongs to the class-I aminoacyl-tRNA synthetase family. TyrS type 1 subfamily.</text>
</comment>
<organism>
    <name type="scientific">Leifsonia xyli subsp. xyli (strain CTCB07)</name>
    <dbReference type="NCBI Taxonomy" id="281090"/>
    <lineage>
        <taxon>Bacteria</taxon>
        <taxon>Bacillati</taxon>
        <taxon>Actinomycetota</taxon>
        <taxon>Actinomycetes</taxon>
        <taxon>Micrococcales</taxon>
        <taxon>Microbacteriaceae</taxon>
        <taxon>Leifsonia</taxon>
    </lineage>
</organism>
<dbReference type="EC" id="6.1.1.1" evidence="1"/>
<dbReference type="EMBL" id="AE016822">
    <property type="protein sequence ID" value="AAT88573.1"/>
    <property type="molecule type" value="Genomic_DNA"/>
</dbReference>
<dbReference type="RefSeq" id="WP_011185572.1">
    <property type="nucleotide sequence ID" value="NC_006087.1"/>
</dbReference>
<dbReference type="SMR" id="Q6AGC2"/>
<dbReference type="STRING" id="281090.Lxx06140"/>
<dbReference type="KEGG" id="lxx:Lxx06140"/>
<dbReference type="eggNOG" id="COG0162">
    <property type="taxonomic scope" value="Bacteria"/>
</dbReference>
<dbReference type="HOGENOM" id="CLU_024003_0_2_11"/>
<dbReference type="Proteomes" id="UP000001306">
    <property type="component" value="Chromosome"/>
</dbReference>
<dbReference type="GO" id="GO:0005829">
    <property type="term" value="C:cytosol"/>
    <property type="evidence" value="ECO:0007669"/>
    <property type="project" value="TreeGrafter"/>
</dbReference>
<dbReference type="GO" id="GO:0005524">
    <property type="term" value="F:ATP binding"/>
    <property type="evidence" value="ECO:0007669"/>
    <property type="project" value="UniProtKB-UniRule"/>
</dbReference>
<dbReference type="GO" id="GO:0003723">
    <property type="term" value="F:RNA binding"/>
    <property type="evidence" value="ECO:0007669"/>
    <property type="project" value="UniProtKB-KW"/>
</dbReference>
<dbReference type="GO" id="GO:0004831">
    <property type="term" value="F:tyrosine-tRNA ligase activity"/>
    <property type="evidence" value="ECO:0007669"/>
    <property type="project" value="UniProtKB-UniRule"/>
</dbReference>
<dbReference type="GO" id="GO:0006437">
    <property type="term" value="P:tyrosyl-tRNA aminoacylation"/>
    <property type="evidence" value="ECO:0007669"/>
    <property type="project" value="UniProtKB-UniRule"/>
</dbReference>
<dbReference type="CDD" id="cd00165">
    <property type="entry name" value="S4"/>
    <property type="match status" value="1"/>
</dbReference>
<dbReference type="CDD" id="cd00805">
    <property type="entry name" value="TyrRS_core"/>
    <property type="match status" value="1"/>
</dbReference>
<dbReference type="FunFam" id="1.10.240.10:FF:000001">
    <property type="entry name" value="Tyrosine--tRNA ligase"/>
    <property type="match status" value="1"/>
</dbReference>
<dbReference type="Gene3D" id="3.40.50.620">
    <property type="entry name" value="HUPs"/>
    <property type="match status" value="1"/>
</dbReference>
<dbReference type="Gene3D" id="3.10.290.10">
    <property type="entry name" value="RNA-binding S4 domain"/>
    <property type="match status" value="1"/>
</dbReference>
<dbReference type="Gene3D" id="1.10.240.10">
    <property type="entry name" value="Tyrosyl-Transfer RNA Synthetase"/>
    <property type="match status" value="1"/>
</dbReference>
<dbReference type="HAMAP" id="MF_02006">
    <property type="entry name" value="Tyr_tRNA_synth_type1"/>
    <property type="match status" value="1"/>
</dbReference>
<dbReference type="InterPro" id="IPR001412">
    <property type="entry name" value="aa-tRNA-synth_I_CS"/>
</dbReference>
<dbReference type="InterPro" id="IPR002305">
    <property type="entry name" value="aa-tRNA-synth_Ic"/>
</dbReference>
<dbReference type="InterPro" id="IPR014729">
    <property type="entry name" value="Rossmann-like_a/b/a_fold"/>
</dbReference>
<dbReference type="InterPro" id="IPR036986">
    <property type="entry name" value="S4_RNA-bd_sf"/>
</dbReference>
<dbReference type="InterPro" id="IPR054608">
    <property type="entry name" value="SYY-like_C"/>
</dbReference>
<dbReference type="InterPro" id="IPR002307">
    <property type="entry name" value="Tyr-tRNA-ligase"/>
</dbReference>
<dbReference type="InterPro" id="IPR024088">
    <property type="entry name" value="Tyr-tRNA-ligase_bac-type"/>
</dbReference>
<dbReference type="InterPro" id="IPR024107">
    <property type="entry name" value="Tyr-tRNA-ligase_bac_1"/>
</dbReference>
<dbReference type="NCBIfam" id="TIGR00234">
    <property type="entry name" value="tyrS"/>
    <property type="match status" value="1"/>
</dbReference>
<dbReference type="PANTHER" id="PTHR11766:SF0">
    <property type="entry name" value="TYROSINE--TRNA LIGASE, MITOCHONDRIAL"/>
    <property type="match status" value="1"/>
</dbReference>
<dbReference type="PANTHER" id="PTHR11766">
    <property type="entry name" value="TYROSYL-TRNA SYNTHETASE"/>
    <property type="match status" value="1"/>
</dbReference>
<dbReference type="Pfam" id="PF22421">
    <property type="entry name" value="SYY_C-terminal"/>
    <property type="match status" value="1"/>
</dbReference>
<dbReference type="Pfam" id="PF00579">
    <property type="entry name" value="tRNA-synt_1b"/>
    <property type="match status" value="1"/>
</dbReference>
<dbReference type="PRINTS" id="PR01040">
    <property type="entry name" value="TRNASYNTHTYR"/>
</dbReference>
<dbReference type="SUPFAM" id="SSF55174">
    <property type="entry name" value="Alpha-L RNA-binding motif"/>
    <property type="match status" value="1"/>
</dbReference>
<dbReference type="SUPFAM" id="SSF52374">
    <property type="entry name" value="Nucleotidylyl transferase"/>
    <property type="match status" value="1"/>
</dbReference>
<dbReference type="PROSITE" id="PS00178">
    <property type="entry name" value="AA_TRNA_LIGASE_I"/>
    <property type="match status" value="1"/>
</dbReference>
<dbReference type="PROSITE" id="PS50889">
    <property type="entry name" value="S4"/>
    <property type="match status" value="1"/>
</dbReference>